<organism>
    <name type="scientific">Geobacter sulfurreducens (strain ATCC 51573 / DSM 12127 / PCA)</name>
    <dbReference type="NCBI Taxonomy" id="243231"/>
    <lineage>
        <taxon>Bacteria</taxon>
        <taxon>Pseudomonadati</taxon>
        <taxon>Thermodesulfobacteriota</taxon>
        <taxon>Desulfuromonadia</taxon>
        <taxon>Geobacterales</taxon>
        <taxon>Geobacteraceae</taxon>
        <taxon>Geobacter</taxon>
    </lineage>
</organism>
<accession>Q74CU0</accession>
<dbReference type="EC" id="2.7.7.-" evidence="3"/>
<dbReference type="EMBL" id="AE017180">
    <property type="protein sequence ID" value="AAR34955.1"/>
    <property type="molecule type" value="Genomic_DNA"/>
</dbReference>
<dbReference type="RefSeq" id="NP_952632.1">
    <property type="nucleotide sequence ID" value="NC_002939.5"/>
</dbReference>
<dbReference type="RefSeq" id="WP_010942226.1">
    <property type="nucleotide sequence ID" value="NC_002939.5"/>
</dbReference>
<dbReference type="SMR" id="Q74CU0"/>
<dbReference type="STRING" id="243231.GSU1581"/>
<dbReference type="EnsemblBacteria" id="AAR34955">
    <property type="protein sequence ID" value="AAR34955"/>
    <property type="gene ID" value="GSU1581"/>
</dbReference>
<dbReference type="KEGG" id="gsu:GSU1581"/>
<dbReference type="PATRIC" id="fig|243231.5.peg.1622"/>
<dbReference type="eggNOG" id="COG0617">
    <property type="taxonomic scope" value="Bacteria"/>
</dbReference>
<dbReference type="eggNOG" id="COG0618">
    <property type="taxonomic scope" value="Bacteria"/>
</dbReference>
<dbReference type="eggNOG" id="COG3620">
    <property type="taxonomic scope" value="Bacteria"/>
</dbReference>
<dbReference type="HOGENOM" id="CLU_015961_5_0_7"/>
<dbReference type="InParanoid" id="Q74CU0"/>
<dbReference type="OrthoDB" id="9805698at2"/>
<dbReference type="Proteomes" id="UP000000577">
    <property type="component" value="Chromosome"/>
</dbReference>
<dbReference type="GO" id="GO:0005524">
    <property type="term" value="F:ATP binding"/>
    <property type="evidence" value="ECO:0007669"/>
    <property type="project" value="UniProtKB-KW"/>
</dbReference>
<dbReference type="GO" id="GO:0052929">
    <property type="term" value="F:ATP:3'-cytidine-cytidine-tRNA adenylyltransferase activity"/>
    <property type="evidence" value="ECO:0007669"/>
    <property type="project" value="RHEA"/>
</dbReference>
<dbReference type="GO" id="GO:0046872">
    <property type="term" value="F:metal ion binding"/>
    <property type="evidence" value="ECO:0007669"/>
    <property type="project" value="UniProtKB-KW"/>
</dbReference>
<dbReference type="GO" id="GO:0000049">
    <property type="term" value="F:tRNA binding"/>
    <property type="evidence" value="ECO:0007669"/>
    <property type="project" value="UniProtKB-KW"/>
</dbReference>
<dbReference type="GO" id="GO:0008033">
    <property type="term" value="P:tRNA processing"/>
    <property type="evidence" value="ECO:0007669"/>
    <property type="project" value="UniProtKB-KW"/>
</dbReference>
<dbReference type="CDD" id="cd17772">
    <property type="entry name" value="CBS_pair_DHH_polyA_Pol_assoc"/>
    <property type="match status" value="1"/>
</dbReference>
<dbReference type="CDD" id="cd05398">
    <property type="entry name" value="NT_ClassII-CCAase"/>
    <property type="match status" value="1"/>
</dbReference>
<dbReference type="Gene3D" id="3.10.310.30">
    <property type="match status" value="1"/>
</dbReference>
<dbReference type="Gene3D" id="3.30.460.10">
    <property type="entry name" value="Beta Polymerase, domain 2"/>
    <property type="match status" value="1"/>
</dbReference>
<dbReference type="Gene3D" id="3.10.580.10">
    <property type="entry name" value="CBS-domain"/>
    <property type="match status" value="1"/>
</dbReference>
<dbReference type="Gene3D" id="1.10.3090.10">
    <property type="entry name" value="cca-adding enzyme, domain 2"/>
    <property type="match status" value="1"/>
</dbReference>
<dbReference type="Gene3D" id="3.90.1640.10">
    <property type="entry name" value="inorganic pyrophosphatase (n-terminal core)"/>
    <property type="match status" value="1"/>
</dbReference>
<dbReference type="InterPro" id="IPR053794">
    <property type="entry name" value="A-adding_TNT"/>
</dbReference>
<dbReference type="InterPro" id="IPR000644">
    <property type="entry name" value="CBS_dom"/>
</dbReference>
<dbReference type="InterPro" id="IPR046342">
    <property type="entry name" value="CBS_dom_sf"/>
</dbReference>
<dbReference type="InterPro" id="IPR001667">
    <property type="entry name" value="DDH_dom"/>
</dbReference>
<dbReference type="InterPro" id="IPR038763">
    <property type="entry name" value="DHH_sf"/>
</dbReference>
<dbReference type="InterPro" id="IPR003156">
    <property type="entry name" value="DHHA1_dom"/>
</dbReference>
<dbReference type="InterPro" id="IPR043519">
    <property type="entry name" value="NT_sf"/>
</dbReference>
<dbReference type="InterPro" id="IPR002646">
    <property type="entry name" value="PolA_pol_head_dom"/>
</dbReference>
<dbReference type="InterPro" id="IPR032828">
    <property type="entry name" value="PolyA_RNA-bd"/>
</dbReference>
<dbReference type="InterPro" id="IPR052390">
    <property type="entry name" value="tRNA_nt/polyA_polymerase"/>
</dbReference>
<dbReference type="NCBIfam" id="NF041569">
    <property type="entry name" value="A-tRNAntase"/>
    <property type="match status" value="1"/>
</dbReference>
<dbReference type="PANTHER" id="PTHR47788:SF1">
    <property type="entry name" value="A-ADDING TRNA NUCLEOTIDYLTRANSFERASE"/>
    <property type="match status" value="1"/>
</dbReference>
<dbReference type="PANTHER" id="PTHR47788">
    <property type="entry name" value="POLYA POLYMERASE"/>
    <property type="match status" value="1"/>
</dbReference>
<dbReference type="Pfam" id="PF00571">
    <property type="entry name" value="CBS"/>
    <property type="match status" value="2"/>
</dbReference>
<dbReference type="Pfam" id="PF01368">
    <property type="entry name" value="DHH"/>
    <property type="match status" value="1"/>
</dbReference>
<dbReference type="Pfam" id="PF02272">
    <property type="entry name" value="DHHA1"/>
    <property type="match status" value="1"/>
</dbReference>
<dbReference type="Pfam" id="PF01743">
    <property type="entry name" value="PolyA_pol"/>
    <property type="match status" value="1"/>
</dbReference>
<dbReference type="Pfam" id="PF12627">
    <property type="entry name" value="PolyA_pol_RNAbd"/>
    <property type="match status" value="1"/>
</dbReference>
<dbReference type="SMART" id="SM00116">
    <property type="entry name" value="CBS"/>
    <property type="match status" value="2"/>
</dbReference>
<dbReference type="SUPFAM" id="SSF54631">
    <property type="entry name" value="CBS-domain pair"/>
    <property type="match status" value="1"/>
</dbReference>
<dbReference type="SUPFAM" id="SSF64182">
    <property type="entry name" value="DHH phosphoesterases"/>
    <property type="match status" value="1"/>
</dbReference>
<dbReference type="SUPFAM" id="SSF81301">
    <property type="entry name" value="Nucleotidyltransferase"/>
    <property type="match status" value="1"/>
</dbReference>
<dbReference type="SUPFAM" id="SSF81891">
    <property type="entry name" value="Poly A polymerase C-terminal region-like"/>
    <property type="match status" value="1"/>
</dbReference>
<dbReference type="PROSITE" id="PS51371">
    <property type="entry name" value="CBS"/>
    <property type="match status" value="2"/>
</dbReference>
<gene>
    <name evidence="6" type="ordered locus">GSU1581</name>
</gene>
<reference key="1">
    <citation type="journal article" date="2003" name="Science">
        <title>Genome of Geobacter sulfurreducens: metal reduction in subsurface environments.</title>
        <authorList>
            <person name="Methe B.A."/>
            <person name="Nelson K.E."/>
            <person name="Eisen J.A."/>
            <person name="Paulsen I.T."/>
            <person name="Nelson W.C."/>
            <person name="Heidelberg J.F."/>
            <person name="Wu D."/>
            <person name="Wu M."/>
            <person name="Ward N.L."/>
            <person name="Beanan M.J."/>
            <person name="Dodson R.J."/>
            <person name="Madupu R."/>
            <person name="Brinkac L.M."/>
            <person name="Daugherty S.C."/>
            <person name="DeBoy R.T."/>
            <person name="Durkin A.S."/>
            <person name="Gwinn M.L."/>
            <person name="Kolonay J.F."/>
            <person name="Sullivan S.A."/>
            <person name="Haft D.H."/>
            <person name="Selengut J."/>
            <person name="Davidsen T.M."/>
            <person name="Zafar N."/>
            <person name="White O."/>
            <person name="Tran B."/>
            <person name="Romero C."/>
            <person name="Forberger H.A."/>
            <person name="Weidman J.F."/>
            <person name="Khouri H.M."/>
            <person name="Feldblyum T.V."/>
            <person name="Utterback T.R."/>
            <person name="Van Aken S.E."/>
            <person name="Lovley D.R."/>
            <person name="Fraser C.M."/>
        </authorList>
    </citation>
    <scope>NUCLEOTIDE SEQUENCE [LARGE SCALE GENOMIC DNA]</scope>
    <source>
        <strain>ATCC 51573 / DSM 12127 / PCA</strain>
    </source>
</reference>
<reference key="2">
    <citation type="journal article" date="2009" name="J. Bacteriol.">
        <title>Geobacter sulfurreducens contains separate C- and A-adding tRNA nucleotidyltransferases and a poly(A) polymerase.</title>
        <authorList>
            <person name="Bralley P."/>
            <person name="Cozad M."/>
            <person name="Jones G.H."/>
        </authorList>
    </citation>
    <scope>FUNCTION</scope>
    <scope>CATALYTIC ACTIVITY</scope>
    <source>
        <strain>ATCC 51573 / DSM 12127 / PCA</strain>
    </source>
</reference>
<evidence type="ECO:0000250" key="1">
    <source>
        <dbReference type="UniProtKB" id="O66728"/>
    </source>
</evidence>
<evidence type="ECO:0000255" key="2">
    <source>
        <dbReference type="PROSITE-ProRule" id="PRU00703"/>
    </source>
</evidence>
<evidence type="ECO:0000269" key="3">
    <source>
    </source>
</evidence>
<evidence type="ECO:0000303" key="4">
    <source>
    </source>
</evidence>
<evidence type="ECO:0000305" key="5"/>
<evidence type="ECO:0000312" key="6">
    <source>
        <dbReference type="EMBL" id="AAR34955.1"/>
    </source>
</evidence>
<keyword id="KW-0067">ATP-binding</keyword>
<keyword id="KW-0129">CBS domain</keyword>
<keyword id="KW-0460">Magnesium</keyword>
<keyword id="KW-0479">Metal-binding</keyword>
<keyword id="KW-0547">Nucleotide-binding</keyword>
<keyword id="KW-0548">Nucleotidyltransferase</keyword>
<keyword id="KW-1185">Reference proteome</keyword>
<keyword id="KW-0677">Repeat</keyword>
<keyword id="KW-0694">RNA-binding</keyword>
<keyword id="KW-0808">Transferase</keyword>
<keyword id="KW-0819">tRNA processing</keyword>
<keyword id="KW-0820">tRNA-binding</keyword>
<feature type="chain" id="PRO_0000447566" description="A-adding tRNA nucleotidyltransferase">
    <location>
        <begin position="1"/>
        <end position="880"/>
    </location>
</feature>
<feature type="domain" description="CBS 1" evidence="2">
    <location>
        <begin position="315"/>
        <end position="373"/>
    </location>
</feature>
<feature type="domain" description="CBS 2" evidence="2">
    <location>
        <begin position="377"/>
        <end position="435"/>
    </location>
</feature>
<feature type="binding site" evidence="1">
    <location>
        <begin position="487"/>
        <end position="490"/>
    </location>
    <ligand>
        <name>ATP</name>
        <dbReference type="ChEBI" id="CHEBI:30616"/>
    </ligand>
</feature>
<feature type="binding site" evidence="1">
    <location>
        <position position="500"/>
    </location>
    <ligand>
        <name>Mg(2+)</name>
        <dbReference type="ChEBI" id="CHEBI:18420"/>
    </ligand>
</feature>
<feature type="binding site" evidence="1">
    <location>
        <position position="502"/>
    </location>
    <ligand>
        <name>Mg(2+)</name>
        <dbReference type="ChEBI" id="CHEBI:18420"/>
    </ligand>
</feature>
<feature type="binding site" evidence="1">
    <location>
        <begin position="574"/>
        <end position="575"/>
    </location>
    <ligand>
        <name>ATP</name>
        <dbReference type="ChEBI" id="CHEBI:30616"/>
    </ligand>
</feature>
<feature type="binding site" evidence="1">
    <location>
        <position position="579"/>
    </location>
    <ligand>
        <name>ATP</name>
        <dbReference type="ChEBI" id="CHEBI:30616"/>
    </ligand>
</feature>
<feature type="binding site" evidence="1">
    <location>
        <begin position="619"/>
        <end position="628"/>
    </location>
    <ligand>
        <name>ATP</name>
        <dbReference type="ChEBI" id="CHEBI:30616"/>
    </ligand>
</feature>
<feature type="binding site" evidence="1">
    <location>
        <position position="632"/>
    </location>
    <ligand>
        <name>ATP</name>
        <dbReference type="ChEBI" id="CHEBI:30616"/>
    </ligand>
</feature>
<feature type="binding site" evidence="1">
    <location>
        <position position="661"/>
    </location>
    <ligand>
        <name>ATP</name>
        <dbReference type="ChEBI" id="CHEBI:30616"/>
    </ligand>
</feature>
<proteinExistence type="evidence at protein level"/>
<name>AATNT_GEOSL</name>
<sequence>MDVITTHVNADFDCLGAMVAASKLYPDALMVFSGSQEKSMRDLFLKTTGYALPFTRLRDVDFSDITRLVLVDCQHTSRIGRFAEVARRPGVEVHIYDHHPGSSGDIRPSGGEIRDCGSSTTILTRKLMEQGIEVTAVEATLMMLGIYEDTGNLTFPSTTPEDYAAASWLLERGANLNIVSDFVSQELTAEQVALLNDLLKSLRSTPVNGVDIAVAHATLDHYVGDIAVLAHMMRDMQNLDAIFLVVGMGERVYLVARSRIAEVDAGAVMRVFGGGGHATAAAATVRDQTVIQVLGRLNRLLPELVNPVRTAADLMSSPVITLPLATTITEAREILTRYNVNAMPVMDGERMAGIISRRIVEKALYHGLGNLPVDEYMHTEFLRAAPDTPINAIQDYIVGQHRRLVPVFSGERLVGVITRTDLLRYMYTGTQRNAEPVYDLGSENLPVRRREVVHLMNRHLPRPTVAMLRDLGKVGDELELPVYAVGGFVRDLLLGAENDDIDVSVEGDGILFAETVANRVGCRVKSHAKFGTAVIVFPDGLKVDVASTRLEYYETPGALPTVERSSLKMDLYRRDFTINTLAVKLNAEGFGTLIDYFGAYRDLQEKTIRVLHNLSFVEDPTRVFRAIRFEQRLGFPISRHTENLIKNAVKMGFLDKLGGRRLLNELVLILREREPVKAILRMSGLGLLRFIHPDLVLAPNTLQVLDEVKKVITWFDLLYLGEKVETWVVYFLALTSSLPDEGFWGTCTRLSVSEHYREKLIDMRVHGEQVLEVMTRKAARREDVRRSDIYFWLRGLSPEVLLYIMAKTRSDEVRRYVSLYVTQLRGIVTHITGDDLKTLGIPSGPRYREILDRVLTARLNGEAATRDDEMRIAVRLADSA</sequence>
<protein>
    <recommendedName>
        <fullName evidence="4">A-adding tRNA nucleotidyltransferase</fullName>
        <shortName evidence="4">A-adding TNT</shortName>
        <ecNumber evidence="3">2.7.7.-</ecNumber>
    </recommendedName>
    <alternativeName>
        <fullName evidence="5">A-adding enzyme</fullName>
    </alternativeName>
    <alternativeName>
        <fullName evidence="4">NTSFIII</fullName>
    </alternativeName>
</protein>
<comment type="function">
    <text evidence="3">tRNA nucleotidyltransferase involved in the synthesis of the tRNA CCA terminus. Adds the terminal adenosine residue to tRNA.</text>
</comment>
<comment type="catalytic activity">
    <reaction evidence="3">
        <text>a tRNA with a 3' CC end + ATP = a tRNA with a 3' CCA end + diphosphate</text>
        <dbReference type="Rhea" id="RHEA:60012"/>
        <dbReference type="Rhea" id="RHEA-COMP:10468"/>
        <dbReference type="Rhea" id="RHEA-COMP:15488"/>
        <dbReference type="ChEBI" id="CHEBI:30616"/>
        <dbReference type="ChEBI" id="CHEBI:33019"/>
        <dbReference type="ChEBI" id="CHEBI:83069"/>
        <dbReference type="ChEBI" id="CHEBI:83071"/>
    </reaction>
    <physiologicalReaction direction="left-to-right" evidence="3">
        <dbReference type="Rhea" id="RHEA:60013"/>
    </physiologicalReaction>
</comment>
<comment type="cofactor">
    <cofactor evidence="1">
        <name>Mg(2+)</name>
        <dbReference type="ChEBI" id="CHEBI:18420"/>
    </cofactor>
</comment>
<comment type="similarity">
    <text evidence="5">Belongs to the tRNA nucleotidyltransferase/poly(A) polymerase family.</text>
</comment>